<evidence type="ECO:0000255" key="1">
    <source>
        <dbReference type="HAMAP-Rule" id="MF_00017"/>
    </source>
</evidence>
<proteinExistence type="inferred from homology"/>
<organism>
    <name type="scientific">Escherichia coli (strain K12 / MC4100 / BW2952)</name>
    <dbReference type="NCBI Taxonomy" id="595496"/>
    <lineage>
        <taxon>Bacteria</taxon>
        <taxon>Pseudomonadati</taxon>
        <taxon>Pseudomonadota</taxon>
        <taxon>Gammaproteobacteria</taxon>
        <taxon>Enterobacterales</taxon>
        <taxon>Enterobacteriaceae</taxon>
        <taxon>Escherichia</taxon>
    </lineage>
</organism>
<sequence>MQTSPLLTQLMEALRCLPGVGPKSAQRMAFTLLQRDRSGGMRLAQALTRAMSEIGHCADCRTFTEQEVCNICSNPRRQENGQICVVESPADIYAIEQTGQFSGRYFVLMGHLSPLDGIGPDDIGLDRLEQRLAEEKITEVILATNPTVEGEATANYIAELCAQYDVEASRIAHGVPVGGELEMVDGTTLSHSLAGRHKIRF</sequence>
<feature type="chain" id="PRO_1000201859" description="Recombination protein RecR">
    <location>
        <begin position="1"/>
        <end position="201"/>
    </location>
</feature>
<feature type="domain" description="Toprim" evidence="1">
    <location>
        <begin position="81"/>
        <end position="176"/>
    </location>
</feature>
<feature type="zinc finger region" description="C4-type" evidence="1">
    <location>
        <begin position="57"/>
        <end position="72"/>
    </location>
</feature>
<accession>C4ZUS6</accession>
<name>RECR_ECOBW</name>
<reference key="1">
    <citation type="journal article" date="2009" name="J. Bacteriol.">
        <title>Genomic sequencing reveals regulatory mutations and recombinational events in the widely used MC4100 lineage of Escherichia coli K-12.</title>
        <authorList>
            <person name="Ferenci T."/>
            <person name="Zhou Z."/>
            <person name="Betteridge T."/>
            <person name="Ren Y."/>
            <person name="Liu Y."/>
            <person name="Feng L."/>
            <person name="Reeves P.R."/>
            <person name="Wang L."/>
        </authorList>
    </citation>
    <scope>NUCLEOTIDE SEQUENCE [LARGE SCALE GENOMIC DNA]</scope>
    <source>
        <strain>K12 / MC4100 / BW2952</strain>
    </source>
</reference>
<gene>
    <name evidence="1" type="primary">recR</name>
    <name type="ordered locus">BWG_0353</name>
</gene>
<comment type="function">
    <text evidence="1">May play a role in DNA repair. It seems to be involved in an RecBC-independent recombinational process of DNA repair. It may act with RecF and RecO.</text>
</comment>
<comment type="similarity">
    <text evidence="1">Belongs to the RecR family.</text>
</comment>
<protein>
    <recommendedName>
        <fullName evidence="1">Recombination protein RecR</fullName>
    </recommendedName>
</protein>
<dbReference type="EMBL" id="CP001396">
    <property type="protein sequence ID" value="ACR63284.1"/>
    <property type="molecule type" value="Genomic_DNA"/>
</dbReference>
<dbReference type="RefSeq" id="WP_001195025.1">
    <property type="nucleotide sequence ID" value="NC_012759.1"/>
</dbReference>
<dbReference type="SMR" id="C4ZUS6"/>
<dbReference type="GeneID" id="93776978"/>
<dbReference type="KEGG" id="ebw:BWG_0353"/>
<dbReference type="HOGENOM" id="CLU_060739_1_2_6"/>
<dbReference type="GO" id="GO:0003677">
    <property type="term" value="F:DNA binding"/>
    <property type="evidence" value="ECO:0007669"/>
    <property type="project" value="UniProtKB-UniRule"/>
</dbReference>
<dbReference type="GO" id="GO:0008270">
    <property type="term" value="F:zinc ion binding"/>
    <property type="evidence" value="ECO:0007669"/>
    <property type="project" value="UniProtKB-KW"/>
</dbReference>
<dbReference type="GO" id="GO:0006310">
    <property type="term" value="P:DNA recombination"/>
    <property type="evidence" value="ECO:0007669"/>
    <property type="project" value="UniProtKB-UniRule"/>
</dbReference>
<dbReference type="GO" id="GO:0006281">
    <property type="term" value="P:DNA repair"/>
    <property type="evidence" value="ECO:0007669"/>
    <property type="project" value="UniProtKB-UniRule"/>
</dbReference>
<dbReference type="CDD" id="cd01025">
    <property type="entry name" value="TOPRIM_recR"/>
    <property type="match status" value="1"/>
</dbReference>
<dbReference type="FunFam" id="1.10.8.420:FF:000001">
    <property type="entry name" value="Recombination protein RecR"/>
    <property type="match status" value="1"/>
</dbReference>
<dbReference type="FunFam" id="3.40.1360.10:FF:000001">
    <property type="entry name" value="Recombination protein RecR"/>
    <property type="match status" value="1"/>
</dbReference>
<dbReference type="Gene3D" id="3.40.1360.10">
    <property type="match status" value="1"/>
</dbReference>
<dbReference type="Gene3D" id="6.10.250.240">
    <property type="match status" value="1"/>
</dbReference>
<dbReference type="Gene3D" id="1.10.8.420">
    <property type="entry name" value="RecR Domain 1"/>
    <property type="match status" value="1"/>
</dbReference>
<dbReference type="HAMAP" id="MF_00017">
    <property type="entry name" value="RecR"/>
    <property type="match status" value="1"/>
</dbReference>
<dbReference type="InterPro" id="IPR000093">
    <property type="entry name" value="DNA_Rcmb_RecR"/>
</dbReference>
<dbReference type="InterPro" id="IPR023627">
    <property type="entry name" value="Rcmb_RecR"/>
</dbReference>
<dbReference type="InterPro" id="IPR015967">
    <property type="entry name" value="Rcmb_RecR_Znf"/>
</dbReference>
<dbReference type="InterPro" id="IPR006171">
    <property type="entry name" value="TOPRIM_dom"/>
</dbReference>
<dbReference type="InterPro" id="IPR034137">
    <property type="entry name" value="TOPRIM_RecR"/>
</dbReference>
<dbReference type="NCBIfam" id="TIGR00615">
    <property type="entry name" value="recR"/>
    <property type="match status" value="1"/>
</dbReference>
<dbReference type="PANTHER" id="PTHR30446">
    <property type="entry name" value="RECOMBINATION PROTEIN RECR"/>
    <property type="match status" value="1"/>
</dbReference>
<dbReference type="PANTHER" id="PTHR30446:SF0">
    <property type="entry name" value="RECOMBINATION PROTEIN RECR"/>
    <property type="match status" value="1"/>
</dbReference>
<dbReference type="Pfam" id="PF21175">
    <property type="entry name" value="RecR_C"/>
    <property type="match status" value="1"/>
</dbReference>
<dbReference type="Pfam" id="PF21176">
    <property type="entry name" value="RecR_HhH"/>
    <property type="match status" value="1"/>
</dbReference>
<dbReference type="Pfam" id="PF02132">
    <property type="entry name" value="RecR_ZnF"/>
    <property type="match status" value="1"/>
</dbReference>
<dbReference type="Pfam" id="PF13662">
    <property type="entry name" value="Toprim_4"/>
    <property type="match status" value="1"/>
</dbReference>
<dbReference type="SMART" id="SM00493">
    <property type="entry name" value="TOPRIM"/>
    <property type="match status" value="1"/>
</dbReference>
<dbReference type="SUPFAM" id="SSF111304">
    <property type="entry name" value="Recombination protein RecR"/>
    <property type="match status" value="1"/>
</dbReference>
<dbReference type="PROSITE" id="PS01300">
    <property type="entry name" value="RECR"/>
    <property type="match status" value="1"/>
</dbReference>
<dbReference type="PROSITE" id="PS50880">
    <property type="entry name" value="TOPRIM"/>
    <property type="match status" value="1"/>
</dbReference>
<keyword id="KW-0227">DNA damage</keyword>
<keyword id="KW-0233">DNA recombination</keyword>
<keyword id="KW-0234">DNA repair</keyword>
<keyword id="KW-0479">Metal-binding</keyword>
<keyword id="KW-0862">Zinc</keyword>
<keyword id="KW-0863">Zinc-finger</keyword>